<accession>Q831S1</accession>
<gene>
    <name evidence="1" type="primary">guaC</name>
    <name type="ordered locus">EF_2429</name>
</gene>
<protein>
    <recommendedName>
        <fullName evidence="1">GMP reductase</fullName>
        <ecNumber evidence="1">1.7.1.7</ecNumber>
    </recommendedName>
    <alternativeName>
        <fullName evidence="1">Guanosine 5'-monophosphate oxidoreductase</fullName>
        <shortName evidence="1">Guanosine monophosphate reductase</shortName>
    </alternativeName>
</protein>
<comment type="function">
    <text evidence="1">Catalyzes the irreversible NADPH-dependent deamination of GMP to IMP. It functions in the conversion of nucleobase, nucleoside and nucleotide derivatives of G to A nucleotides, and in maintaining the intracellular balance of A and G nucleotides.</text>
</comment>
<comment type="catalytic activity">
    <reaction evidence="1">
        <text>IMP + NH4(+) + NADP(+) = GMP + NADPH + 2 H(+)</text>
        <dbReference type="Rhea" id="RHEA:17185"/>
        <dbReference type="ChEBI" id="CHEBI:15378"/>
        <dbReference type="ChEBI" id="CHEBI:28938"/>
        <dbReference type="ChEBI" id="CHEBI:57783"/>
        <dbReference type="ChEBI" id="CHEBI:58053"/>
        <dbReference type="ChEBI" id="CHEBI:58115"/>
        <dbReference type="ChEBI" id="CHEBI:58349"/>
        <dbReference type="EC" id="1.7.1.7"/>
    </reaction>
</comment>
<comment type="similarity">
    <text evidence="1">Belongs to the IMPDH/GMPR family. GuaC type 2 subfamily.</text>
</comment>
<feature type="chain" id="PRO_0000093755" description="GMP reductase">
    <location>
        <begin position="1"/>
        <end position="325"/>
    </location>
</feature>
<feature type="active site" description="Thioimidate intermediate" evidence="1">
    <location>
        <position position="174"/>
    </location>
</feature>
<feature type="binding site" evidence="1">
    <location>
        <begin position="203"/>
        <end position="226"/>
    </location>
    <ligand>
        <name>NADP(+)</name>
        <dbReference type="ChEBI" id="CHEBI:58349"/>
    </ligand>
</feature>
<sequence length="325" mass="35646">MKVFDYEDVQLIPNKCIVNSRSECDTTVTLGKHSFKMPVVPANMQTIIDETIAETLAENGYFYIMHRFDEEARVPFIKKMQQKGLITSISVGVKEGEYAFVETLAREGLVPDYVTIDIAHGHSNAVINMIQHLKKSLPETFVIAGNVGTPEAVRELENAGADATKVGIGPGKVCITKIKTGFGTGGWQLAALRWCAKAARKPIIADGGIRTHGDIAKSVRFGATMVMIGSLFAGHEESPGETKVEDGVVYKEYFGSASEFQKGEKKNVEGKKIWLRHKGKLADTLVEMQQDLQSSISYAGGRDLEAIRKVDYVIVKNSIFNGDTI</sequence>
<reference key="1">
    <citation type="journal article" date="2003" name="Science">
        <title>Role of mobile DNA in the evolution of vancomycin-resistant Enterococcus faecalis.</title>
        <authorList>
            <person name="Paulsen I.T."/>
            <person name="Banerjei L."/>
            <person name="Myers G.S.A."/>
            <person name="Nelson K.E."/>
            <person name="Seshadri R."/>
            <person name="Read T.D."/>
            <person name="Fouts D.E."/>
            <person name="Eisen J.A."/>
            <person name="Gill S.R."/>
            <person name="Heidelberg J.F."/>
            <person name="Tettelin H."/>
            <person name="Dodson R.J."/>
            <person name="Umayam L.A."/>
            <person name="Brinkac L.M."/>
            <person name="Beanan M.J."/>
            <person name="Daugherty S.C."/>
            <person name="DeBoy R.T."/>
            <person name="Durkin S.A."/>
            <person name="Kolonay J.F."/>
            <person name="Madupu R."/>
            <person name="Nelson W.C."/>
            <person name="Vamathevan J.J."/>
            <person name="Tran B."/>
            <person name="Upton J."/>
            <person name="Hansen T."/>
            <person name="Shetty J."/>
            <person name="Khouri H.M."/>
            <person name="Utterback T.R."/>
            <person name="Radune D."/>
            <person name="Ketchum K.A."/>
            <person name="Dougherty B.A."/>
            <person name="Fraser C.M."/>
        </authorList>
    </citation>
    <scope>NUCLEOTIDE SEQUENCE [LARGE SCALE GENOMIC DNA]</scope>
    <source>
        <strain>ATCC 700802 / V583</strain>
    </source>
</reference>
<keyword id="KW-0521">NADP</keyword>
<keyword id="KW-0560">Oxidoreductase</keyword>
<keyword id="KW-1185">Reference proteome</keyword>
<dbReference type="EC" id="1.7.1.7" evidence="1"/>
<dbReference type="EMBL" id="AE016830">
    <property type="protein sequence ID" value="AAO82147.1"/>
    <property type="molecule type" value="Genomic_DNA"/>
</dbReference>
<dbReference type="RefSeq" id="NP_816077.1">
    <property type="nucleotide sequence ID" value="NC_004668.1"/>
</dbReference>
<dbReference type="RefSeq" id="WP_002356720.1">
    <property type="nucleotide sequence ID" value="NZ_KE136528.1"/>
</dbReference>
<dbReference type="SMR" id="Q831S1"/>
<dbReference type="STRING" id="226185.EF_2429"/>
<dbReference type="EnsemblBacteria" id="AAO82147">
    <property type="protein sequence ID" value="AAO82147"/>
    <property type="gene ID" value="EF_2429"/>
</dbReference>
<dbReference type="KEGG" id="efa:EF2429"/>
<dbReference type="PATRIC" id="fig|226185.45.peg.1116"/>
<dbReference type="eggNOG" id="COG0516">
    <property type="taxonomic scope" value="Bacteria"/>
</dbReference>
<dbReference type="HOGENOM" id="CLU_022552_5_0_9"/>
<dbReference type="Proteomes" id="UP000001415">
    <property type="component" value="Chromosome"/>
</dbReference>
<dbReference type="GO" id="GO:0005829">
    <property type="term" value="C:cytosol"/>
    <property type="evidence" value="ECO:0007669"/>
    <property type="project" value="TreeGrafter"/>
</dbReference>
<dbReference type="GO" id="GO:1902560">
    <property type="term" value="C:GMP reductase complex"/>
    <property type="evidence" value="ECO:0007669"/>
    <property type="project" value="InterPro"/>
</dbReference>
<dbReference type="GO" id="GO:0003920">
    <property type="term" value="F:GMP reductase activity"/>
    <property type="evidence" value="ECO:0007669"/>
    <property type="project" value="UniProtKB-UniRule"/>
</dbReference>
<dbReference type="GO" id="GO:0006163">
    <property type="term" value="P:purine nucleotide metabolic process"/>
    <property type="evidence" value="ECO:0007669"/>
    <property type="project" value="UniProtKB-UniRule"/>
</dbReference>
<dbReference type="CDD" id="cd00381">
    <property type="entry name" value="IMPDH"/>
    <property type="match status" value="1"/>
</dbReference>
<dbReference type="FunFam" id="3.20.20.70:FF:000079">
    <property type="entry name" value="GMP reductase"/>
    <property type="match status" value="1"/>
</dbReference>
<dbReference type="Gene3D" id="3.20.20.70">
    <property type="entry name" value="Aldolase class I"/>
    <property type="match status" value="1"/>
</dbReference>
<dbReference type="HAMAP" id="MF_01511">
    <property type="entry name" value="GMP_reduct_type2"/>
    <property type="match status" value="1"/>
</dbReference>
<dbReference type="InterPro" id="IPR013785">
    <property type="entry name" value="Aldolase_TIM"/>
</dbReference>
<dbReference type="InterPro" id="IPR050139">
    <property type="entry name" value="GMP_reductase"/>
</dbReference>
<dbReference type="InterPro" id="IPR005994">
    <property type="entry name" value="GuaC_type_2"/>
</dbReference>
<dbReference type="InterPro" id="IPR015875">
    <property type="entry name" value="IMP_DH/GMP_Rdtase_CS"/>
</dbReference>
<dbReference type="InterPro" id="IPR001093">
    <property type="entry name" value="IMP_DH_GMPRt"/>
</dbReference>
<dbReference type="NCBIfam" id="TIGR01306">
    <property type="entry name" value="GMP_reduct_2"/>
    <property type="match status" value="1"/>
</dbReference>
<dbReference type="NCBIfam" id="NF003966">
    <property type="entry name" value="PRK05458.1"/>
    <property type="match status" value="1"/>
</dbReference>
<dbReference type="PANTHER" id="PTHR43170">
    <property type="entry name" value="GMP REDUCTASE"/>
    <property type="match status" value="1"/>
</dbReference>
<dbReference type="PANTHER" id="PTHR43170:SF5">
    <property type="entry name" value="GMP REDUCTASE"/>
    <property type="match status" value="1"/>
</dbReference>
<dbReference type="Pfam" id="PF00478">
    <property type="entry name" value="IMPDH"/>
    <property type="match status" value="1"/>
</dbReference>
<dbReference type="PIRSF" id="PIRSF036500">
    <property type="entry name" value="GMP_red_Firmic"/>
    <property type="match status" value="1"/>
</dbReference>
<dbReference type="SMART" id="SM01240">
    <property type="entry name" value="IMPDH"/>
    <property type="match status" value="1"/>
</dbReference>
<dbReference type="SUPFAM" id="SSF51412">
    <property type="entry name" value="Inosine monophosphate dehydrogenase (IMPDH)"/>
    <property type="match status" value="1"/>
</dbReference>
<dbReference type="PROSITE" id="PS00487">
    <property type="entry name" value="IMP_DH_GMP_RED"/>
    <property type="match status" value="1"/>
</dbReference>
<organism>
    <name type="scientific">Enterococcus faecalis (strain ATCC 700802 / V583)</name>
    <dbReference type="NCBI Taxonomy" id="226185"/>
    <lineage>
        <taxon>Bacteria</taxon>
        <taxon>Bacillati</taxon>
        <taxon>Bacillota</taxon>
        <taxon>Bacilli</taxon>
        <taxon>Lactobacillales</taxon>
        <taxon>Enterococcaceae</taxon>
        <taxon>Enterococcus</taxon>
    </lineage>
</organism>
<evidence type="ECO:0000255" key="1">
    <source>
        <dbReference type="HAMAP-Rule" id="MF_01511"/>
    </source>
</evidence>
<proteinExistence type="inferred from homology"/>
<name>GUAC_ENTFA</name>